<dbReference type="EC" id="6.1.1.16" evidence="1"/>
<dbReference type="EMBL" id="CP000086">
    <property type="protein sequence ID" value="ABC37691.1"/>
    <property type="molecule type" value="Genomic_DNA"/>
</dbReference>
<dbReference type="RefSeq" id="WP_009890291.1">
    <property type="nucleotide sequence ID" value="NZ_CP008785.1"/>
</dbReference>
<dbReference type="SMR" id="Q2SX78"/>
<dbReference type="GeneID" id="45121672"/>
<dbReference type="KEGG" id="bte:BTH_I1941"/>
<dbReference type="HOGENOM" id="CLU_013528_0_1_4"/>
<dbReference type="Proteomes" id="UP000001930">
    <property type="component" value="Chromosome I"/>
</dbReference>
<dbReference type="GO" id="GO:0005829">
    <property type="term" value="C:cytosol"/>
    <property type="evidence" value="ECO:0007669"/>
    <property type="project" value="TreeGrafter"/>
</dbReference>
<dbReference type="GO" id="GO:0005524">
    <property type="term" value="F:ATP binding"/>
    <property type="evidence" value="ECO:0007669"/>
    <property type="project" value="UniProtKB-UniRule"/>
</dbReference>
<dbReference type="GO" id="GO:0004817">
    <property type="term" value="F:cysteine-tRNA ligase activity"/>
    <property type="evidence" value="ECO:0007669"/>
    <property type="project" value="UniProtKB-UniRule"/>
</dbReference>
<dbReference type="GO" id="GO:0008270">
    <property type="term" value="F:zinc ion binding"/>
    <property type="evidence" value="ECO:0007669"/>
    <property type="project" value="UniProtKB-UniRule"/>
</dbReference>
<dbReference type="GO" id="GO:0006423">
    <property type="term" value="P:cysteinyl-tRNA aminoacylation"/>
    <property type="evidence" value="ECO:0007669"/>
    <property type="project" value="UniProtKB-UniRule"/>
</dbReference>
<dbReference type="CDD" id="cd07963">
    <property type="entry name" value="Anticodon_Ia_Cys"/>
    <property type="match status" value="1"/>
</dbReference>
<dbReference type="CDD" id="cd00672">
    <property type="entry name" value="CysRS_core"/>
    <property type="match status" value="1"/>
</dbReference>
<dbReference type="FunFam" id="3.40.50.620:FF:000009">
    <property type="entry name" value="Cysteine--tRNA ligase"/>
    <property type="match status" value="1"/>
</dbReference>
<dbReference type="Gene3D" id="1.20.120.1910">
    <property type="entry name" value="Cysteine-tRNA ligase, C-terminal anti-codon recognition domain"/>
    <property type="match status" value="1"/>
</dbReference>
<dbReference type="Gene3D" id="3.40.50.620">
    <property type="entry name" value="HUPs"/>
    <property type="match status" value="1"/>
</dbReference>
<dbReference type="HAMAP" id="MF_00041">
    <property type="entry name" value="Cys_tRNA_synth"/>
    <property type="match status" value="1"/>
</dbReference>
<dbReference type="InterPro" id="IPR015803">
    <property type="entry name" value="Cys-tRNA-ligase"/>
</dbReference>
<dbReference type="InterPro" id="IPR015273">
    <property type="entry name" value="Cys-tRNA-synt_Ia_DALR"/>
</dbReference>
<dbReference type="InterPro" id="IPR024909">
    <property type="entry name" value="Cys-tRNA/MSH_ligase"/>
</dbReference>
<dbReference type="InterPro" id="IPR056411">
    <property type="entry name" value="CysS_C"/>
</dbReference>
<dbReference type="InterPro" id="IPR014729">
    <property type="entry name" value="Rossmann-like_a/b/a_fold"/>
</dbReference>
<dbReference type="InterPro" id="IPR032678">
    <property type="entry name" value="tRNA-synt_1_cat_dom"/>
</dbReference>
<dbReference type="InterPro" id="IPR009080">
    <property type="entry name" value="tRNAsynth_Ia_anticodon-bd"/>
</dbReference>
<dbReference type="NCBIfam" id="TIGR00435">
    <property type="entry name" value="cysS"/>
    <property type="match status" value="1"/>
</dbReference>
<dbReference type="PANTHER" id="PTHR10890:SF3">
    <property type="entry name" value="CYSTEINE--TRNA LIGASE, CYTOPLASMIC"/>
    <property type="match status" value="1"/>
</dbReference>
<dbReference type="PANTHER" id="PTHR10890">
    <property type="entry name" value="CYSTEINYL-TRNA SYNTHETASE"/>
    <property type="match status" value="1"/>
</dbReference>
<dbReference type="Pfam" id="PF23493">
    <property type="entry name" value="CysS_C"/>
    <property type="match status" value="1"/>
</dbReference>
<dbReference type="Pfam" id="PF09190">
    <property type="entry name" value="DALR_2"/>
    <property type="match status" value="1"/>
</dbReference>
<dbReference type="Pfam" id="PF01406">
    <property type="entry name" value="tRNA-synt_1e"/>
    <property type="match status" value="1"/>
</dbReference>
<dbReference type="PRINTS" id="PR00983">
    <property type="entry name" value="TRNASYNTHCYS"/>
</dbReference>
<dbReference type="SMART" id="SM00840">
    <property type="entry name" value="DALR_2"/>
    <property type="match status" value="1"/>
</dbReference>
<dbReference type="SUPFAM" id="SSF47323">
    <property type="entry name" value="Anticodon-binding domain of a subclass of class I aminoacyl-tRNA synthetases"/>
    <property type="match status" value="1"/>
</dbReference>
<dbReference type="SUPFAM" id="SSF52374">
    <property type="entry name" value="Nucleotidylyl transferase"/>
    <property type="match status" value="1"/>
</dbReference>
<organism>
    <name type="scientific">Burkholderia thailandensis (strain ATCC 700388 / DSM 13276 / CCUG 48851 / CIP 106301 / E264)</name>
    <dbReference type="NCBI Taxonomy" id="271848"/>
    <lineage>
        <taxon>Bacteria</taxon>
        <taxon>Pseudomonadati</taxon>
        <taxon>Pseudomonadota</taxon>
        <taxon>Betaproteobacteria</taxon>
        <taxon>Burkholderiales</taxon>
        <taxon>Burkholderiaceae</taxon>
        <taxon>Burkholderia</taxon>
        <taxon>pseudomallei group</taxon>
    </lineage>
</organism>
<comment type="catalytic activity">
    <reaction evidence="1">
        <text>tRNA(Cys) + L-cysteine + ATP = L-cysteinyl-tRNA(Cys) + AMP + diphosphate</text>
        <dbReference type="Rhea" id="RHEA:17773"/>
        <dbReference type="Rhea" id="RHEA-COMP:9661"/>
        <dbReference type="Rhea" id="RHEA-COMP:9679"/>
        <dbReference type="ChEBI" id="CHEBI:30616"/>
        <dbReference type="ChEBI" id="CHEBI:33019"/>
        <dbReference type="ChEBI" id="CHEBI:35235"/>
        <dbReference type="ChEBI" id="CHEBI:78442"/>
        <dbReference type="ChEBI" id="CHEBI:78517"/>
        <dbReference type="ChEBI" id="CHEBI:456215"/>
        <dbReference type="EC" id="6.1.1.16"/>
    </reaction>
</comment>
<comment type="cofactor">
    <cofactor evidence="1">
        <name>Zn(2+)</name>
        <dbReference type="ChEBI" id="CHEBI:29105"/>
    </cofactor>
    <text evidence="1">Binds 1 zinc ion per subunit.</text>
</comment>
<comment type="subunit">
    <text evidence="1">Monomer.</text>
</comment>
<comment type="subcellular location">
    <subcellularLocation>
        <location evidence="1">Cytoplasm</location>
    </subcellularLocation>
</comment>
<comment type="similarity">
    <text evidence="1">Belongs to the class-I aminoacyl-tRNA synthetase family.</text>
</comment>
<keyword id="KW-0030">Aminoacyl-tRNA synthetase</keyword>
<keyword id="KW-0067">ATP-binding</keyword>
<keyword id="KW-0963">Cytoplasm</keyword>
<keyword id="KW-0436">Ligase</keyword>
<keyword id="KW-0479">Metal-binding</keyword>
<keyword id="KW-0547">Nucleotide-binding</keyword>
<keyword id="KW-0648">Protein biosynthesis</keyword>
<keyword id="KW-0862">Zinc</keyword>
<reference key="1">
    <citation type="journal article" date="2005" name="BMC Genomics">
        <title>Bacterial genome adaptation to niches: divergence of the potential virulence genes in three Burkholderia species of different survival strategies.</title>
        <authorList>
            <person name="Kim H.S."/>
            <person name="Schell M.A."/>
            <person name="Yu Y."/>
            <person name="Ulrich R.L."/>
            <person name="Sarria S.H."/>
            <person name="Nierman W.C."/>
            <person name="DeShazer D."/>
        </authorList>
    </citation>
    <scope>NUCLEOTIDE SEQUENCE [LARGE SCALE GENOMIC DNA]</scope>
    <source>
        <strain>ATCC 700388 / DSM 13276 / CCUG 48851 / CIP 106301 / E264</strain>
    </source>
</reference>
<proteinExistence type="inferred from homology"/>
<gene>
    <name evidence="1" type="primary">cysS</name>
    <name type="ordered locus">BTH_I1941</name>
</gene>
<feature type="chain" id="PRO_0000240898" description="Cysteine--tRNA ligase">
    <location>
        <begin position="1"/>
        <end position="465"/>
    </location>
</feature>
<feature type="short sequence motif" description="'HIGH' region">
    <location>
        <begin position="32"/>
        <end position="42"/>
    </location>
</feature>
<feature type="short sequence motif" description="'KMSKS' region">
    <location>
        <begin position="271"/>
        <end position="275"/>
    </location>
</feature>
<feature type="binding site" evidence="1">
    <location>
        <position position="30"/>
    </location>
    <ligand>
        <name>Zn(2+)</name>
        <dbReference type="ChEBI" id="CHEBI:29105"/>
    </ligand>
</feature>
<feature type="binding site" evidence="1">
    <location>
        <position position="214"/>
    </location>
    <ligand>
        <name>Zn(2+)</name>
        <dbReference type="ChEBI" id="CHEBI:29105"/>
    </ligand>
</feature>
<feature type="binding site" evidence="1">
    <location>
        <position position="239"/>
    </location>
    <ligand>
        <name>Zn(2+)</name>
        <dbReference type="ChEBI" id="CHEBI:29105"/>
    </ligand>
</feature>
<feature type="binding site" evidence="1">
    <location>
        <position position="243"/>
    </location>
    <ligand>
        <name>Zn(2+)</name>
        <dbReference type="ChEBI" id="CHEBI:29105"/>
    </ligand>
</feature>
<feature type="binding site" evidence="1">
    <location>
        <position position="274"/>
    </location>
    <ligand>
        <name>ATP</name>
        <dbReference type="ChEBI" id="CHEBI:30616"/>
    </ligand>
</feature>
<protein>
    <recommendedName>
        <fullName evidence="1">Cysteine--tRNA ligase</fullName>
        <ecNumber evidence="1">6.1.1.16</ecNumber>
    </recommendedName>
    <alternativeName>
        <fullName evidence="1">Cysteinyl-tRNA synthetase</fullName>
        <shortName evidence="1">CysRS</shortName>
    </alternativeName>
</protein>
<name>SYC_BURTA</name>
<accession>Q2SX78</accession>
<evidence type="ECO:0000255" key="1">
    <source>
        <dbReference type="HAMAP-Rule" id="MF_00041"/>
    </source>
</evidence>
<sequence length="465" mass="52295">MESLRIYNTLARDKQDFVPRQPGEVRMYVCGITVYDYCHIGHARMVVVFDIVQRWLRAAGYRVTYVRNITDIDDKIIRRALENGETIQSLTRRFIDAMNADFDALGVERPDIEPRATDFIPQMLGMIEKLEANGYAYQAKDGDVNYSVRKFANYGKLSGKSLEDLRAGERVAAKDAKDDPLDFVLWKRAKPEEPAGASWESKYGAGRPGWHIECSAMGCTLLGEHFDIHGGGQDLQFPHHENEIAQSEGATGQTFVNYWMHNGFVQVDSEKMSKSLGNFFTIREVLEKYDAEVVRFFIVRTHYRSPLNYSDVHLDDARASLTRLYTALKDVTPDAAPLDWSEAHAQRFAAAMNDDFNTAVAVAVLFELATEVNRTREPALARQLKRLAGLLGLLGREPREFLQQAAGAARTGALEPDEIEARIAARVAAKQAKNYAEADRIRAELLEAGIALEDKPGGSTEWRRV</sequence>